<evidence type="ECO:0000255" key="1">
    <source>
        <dbReference type="PROSITE-ProRule" id="PRU00298"/>
    </source>
</evidence>
<evidence type="ECO:0000256" key="2">
    <source>
        <dbReference type="SAM" id="MobiDB-lite"/>
    </source>
</evidence>
<evidence type="ECO:0000269" key="3">
    <source>
    </source>
</evidence>
<evidence type="ECO:0000269" key="4">
    <source>
    </source>
</evidence>
<evidence type="ECO:0000303" key="5">
    <source>
    </source>
</evidence>
<evidence type="ECO:0000303" key="6">
    <source>
    </source>
</evidence>
<evidence type="ECO:0000305" key="7"/>
<evidence type="ECO:0000312" key="8">
    <source>
        <dbReference type="EMBL" id="ABV21633.1"/>
    </source>
</evidence>
<evidence type="ECO:0000312" key="9">
    <source>
        <dbReference type="EMBL" id="ACL14177.1"/>
    </source>
</evidence>
<evidence type="ECO:0000312" key="10">
    <source>
        <dbReference type="EMBL" id="EAL92371.2"/>
    </source>
</evidence>
<dbReference type="EC" id="1.13.11.62"/>
<dbReference type="EMBL" id="FJ538183">
    <property type="protein sequence ID" value="ACL14177.1"/>
    <property type="molecule type" value="mRNA"/>
</dbReference>
<dbReference type="EMBL" id="AAHF01000002">
    <property type="protein sequence ID" value="EAL92371.2"/>
    <property type="molecule type" value="Genomic_DNA"/>
</dbReference>
<dbReference type="EMBL" id="EU020168">
    <property type="protein sequence ID" value="ABV21633.1"/>
    <property type="molecule type" value="mRNA"/>
</dbReference>
<dbReference type="RefSeq" id="XP_754409.2">
    <property type="nucleotide sequence ID" value="XM_749316.2"/>
</dbReference>
<dbReference type="SMR" id="Q4WY82"/>
<dbReference type="STRING" id="330879.Q4WY82"/>
<dbReference type="PeroxiBase" id="5291">
    <property type="entry name" value="AfumLDS03"/>
</dbReference>
<dbReference type="EnsemblFungi" id="EAL92371">
    <property type="protein sequence ID" value="EAL92371"/>
    <property type="gene ID" value="AFUA_3G12120"/>
</dbReference>
<dbReference type="GeneID" id="3512584"/>
<dbReference type="KEGG" id="afm:AFUA_3G12120"/>
<dbReference type="VEuPathDB" id="FungiDB:Afu3g12120"/>
<dbReference type="eggNOG" id="KOG2408">
    <property type="taxonomic scope" value="Eukaryota"/>
</dbReference>
<dbReference type="HOGENOM" id="CLU_002329_1_0_1"/>
<dbReference type="InParanoid" id="Q4WY82"/>
<dbReference type="OMA" id="RHYTIDY"/>
<dbReference type="OrthoDB" id="823504at2759"/>
<dbReference type="BioCyc" id="MetaCyc:MONOMER-16944"/>
<dbReference type="BRENDA" id="1.13.11.62">
    <property type="organism ID" value="508"/>
</dbReference>
<dbReference type="SABIO-RK" id="Q4WY82"/>
<dbReference type="PHI-base" id="PHI:496"/>
<dbReference type="Proteomes" id="UP000002530">
    <property type="component" value="Chromosome 3"/>
</dbReference>
<dbReference type="GO" id="GO:0051213">
    <property type="term" value="F:dioxygenase activity"/>
    <property type="evidence" value="ECO:0007669"/>
    <property type="project" value="UniProtKB-KW"/>
</dbReference>
<dbReference type="GO" id="GO:0020037">
    <property type="term" value="F:heme binding"/>
    <property type="evidence" value="ECO:0007669"/>
    <property type="project" value="InterPro"/>
</dbReference>
<dbReference type="GO" id="GO:0005506">
    <property type="term" value="F:iron ion binding"/>
    <property type="evidence" value="ECO:0007669"/>
    <property type="project" value="InterPro"/>
</dbReference>
<dbReference type="GO" id="GO:0004497">
    <property type="term" value="F:monooxygenase activity"/>
    <property type="evidence" value="ECO:0007669"/>
    <property type="project" value="InterPro"/>
</dbReference>
<dbReference type="GO" id="GO:0016705">
    <property type="term" value="F:oxidoreductase activity, acting on paired donors, with incorporation or reduction of molecular oxygen"/>
    <property type="evidence" value="ECO:0007669"/>
    <property type="project" value="InterPro"/>
</dbReference>
<dbReference type="GO" id="GO:0004601">
    <property type="term" value="F:peroxidase activity"/>
    <property type="evidence" value="ECO:0007669"/>
    <property type="project" value="UniProtKB-KW"/>
</dbReference>
<dbReference type="GO" id="GO:0042744">
    <property type="term" value="P:hydrogen peroxide catabolic process"/>
    <property type="evidence" value="ECO:0007669"/>
    <property type="project" value="UniProtKB-KW"/>
</dbReference>
<dbReference type="GO" id="GO:0001516">
    <property type="term" value="P:prostaglandin biosynthetic process"/>
    <property type="evidence" value="ECO:0000315"/>
    <property type="project" value="AspGD"/>
</dbReference>
<dbReference type="GO" id="GO:0006979">
    <property type="term" value="P:response to oxidative stress"/>
    <property type="evidence" value="ECO:0007669"/>
    <property type="project" value="InterPro"/>
</dbReference>
<dbReference type="CDD" id="cd20612">
    <property type="entry name" value="CYP_LDS-like_C"/>
    <property type="match status" value="1"/>
</dbReference>
<dbReference type="CDD" id="cd09817">
    <property type="entry name" value="linoleate_diol_synthase_like"/>
    <property type="match status" value="1"/>
</dbReference>
<dbReference type="FunFam" id="1.10.630.10:FF:000058">
    <property type="entry name" value="Fatty acid oxygenase"/>
    <property type="match status" value="1"/>
</dbReference>
<dbReference type="FunFam" id="1.10.640.10:FF:000005">
    <property type="entry name" value="Fatty acid oxygenase"/>
    <property type="match status" value="1"/>
</dbReference>
<dbReference type="Gene3D" id="1.10.630.10">
    <property type="entry name" value="Cytochrome P450"/>
    <property type="match status" value="1"/>
</dbReference>
<dbReference type="Gene3D" id="1.10.640.10">
    <property type="entry name" value="Haem peroxidase domain superfamily, animal type"/>
    <property type="match status" value="1"/>
</dbReference>
<dbReference type="InterPro" id="IPR036396">
    <property type="entry name" value="Cyt_P450_sf"/>
</dbReference>
<dbReference type="InterPro" id="IPR019791">
    <property type="entry name" value="Haem_peroxidase_animal"/>
</dbReference>
<dbReference type="InterPro" id="IPR010255">
    <property type="entry name" value="Haem_peroxidase_sf"/>
</dbReference>
<dbReference type="InterPro" id="IPR037120">
    <property type="entry name" value="Haem_peroxidase_sf_animal"/>
</dbReference>
<dbReference type="InterPro" id="IPR050783">
    <property type="entry name" value="Oxylipin_biosynth_metab"/>
</dbReference>
<dbReference type="InterPro" id="IPR034812">
    <property type="entry name" value="Ppo-like_N"/>
</dbReference>
<dbReference type="PANTHER" id="PTHR11903:SF13">
    <property type="entry name" value="LINOLEATE 10R-LIPOXYGENASE"/>
    <property type="match status" value="1"/>
</dbReference>
<dbReference type="PANTHER" id="PTHR11903">
    <property type="entry name" value="PROSTAGLANDIN G/H SYNTHASE"/>
    <property type="match status" value="1"/>
</dbReference>
<dbReference type="Pfam" id="PF03098">
    <property type="entry name" value="An_peroxidase"/>
    <property type="match status" value="2"/>
</dbReference>
<dbReference type="PRINTS" id="PR00457">
    <property type="entry name" value="ANPEROXIDASE"/>
</dbReference>
<dbReference type="SUPFAM" id="SSF48264">
    <property type="entry name" value="Cytochrome P450"/>
    <property type="match status" value="1"/>
</dbReference>
<dbReference type="SUPFAM" id="SSF48113">
    <property type="entry name" value="Heme-dependent peroxidases"/>
    <property type="match status" value="1"/>
</dbReference>
<dbReference type="PROSITE" id="PS50292">
    <property type="entry name" value="PEROXIDASE_3"/>
    <property type="match status" value="1"/>
</dbReference>
<feature type="chain" id="PRO_0000397942" description="Linoleate 10R-lipoxygenase">
    <location>
        <begin position="1"/>
        <end position="1121"/>
    </location>
</feature>
<feature type="region of interest" description="Disordered" evidence="2">
    <location>
        <begin position="1"/>
        <end position="66"/>
    </location>
</feature>
<feature type="compositionally biased region" description="Low complexity" evidence="2">
    <location>
        <begin position="22"/>
        <end position="36"/>
    </location>
</feature>
<feature type="compositionally biased region" description="Basic and acidic residues" evidence="2">
    <location>
        <begin position="50"/>
        <end position="61"/>
    </location>
</feature>
<feature type="active site" description="Proton acceptor" evidence="1">
    <location>
        <position position="253"/>
    </location>
</feature>
<feature type="binding site" evidence="1">
    <location>
        <position position="254"/>
    </location>
    <ligand>
        <name>Ca(2+)</name>
        <dbReference type="ChEBI" id="CHEBI:29108"/>
    </ligand>
</feature>
<feature type="binding site" evidence="1">
    <location>
        <position position="269"/>
    </location>
    <ligand>
        <name>Ca(2+)</name>
        <dbReference type="ChEBI" id="CHEBI:29108"/>
    </ligand>
</feature>
<feature type="binding site" evidence="1">
    <location>
        <position position="271"/>
    </location>
    <ligand>
        <name>Ca(2+)</name>
        <dbReference type="ChEBI" id="CHEBI:29108"/>
    </ligand>
</feature>
<feature type="binding site" evidence="1">
    <location>
        <position position="273"/>
    </location>
    <ligand>
        <name>Ca(2+)</name>
        <dbReference type="ChEBI" id="CHEBI:29108"/>
    </ligand>
</feature>
<feature type="binding site" evidence="1">
    <location>
        <position position="275"/>
    </location>
    <ligand>
        <name>Ca(2+)</name>
        <dbReference type="ChEBI" id="CHEBI:29108"/>
    </ligand>
</feature>
<feature type="site" description="Transition state stabilizer" evidence="1">
    <location>
        <position position="305"/>
    </location>
</feature>
<feature type="mutagenesis site" description="Slightly lower synthesis of 8R-HODE. Little effect on epoxyalcohol synthase activity." evidence="4">
    <original>L</original>
    <variation>A</variation>
    <variation>V</variation>
    <location>
        <position position="306"/>
    </location>
</feature>
<feature type="mutagenesis site" description="Increased synthesis of 8-HPODE, 8-HODE and altered product stereochemistry." evidence="4">
    <original>L</original>
    <variation>A</variation>
    <location>
        <position position="384"/>
    </location>
</feature>
<feature type="mutagenesis site" description="Increased synthesis of 8-HODE, synthesis of 9-HPODE and 13-HPODE. Retains chirality in 10- and 8-HODE." evidence="4">
    <original>L</original>
    <variation>F</variation>
    <location>
        <position position="384"/>
    </location>
</feature>
<feature type="mutagenesis site" description="Significantly increased synthesis of 8-HODE." evidence="4">
    <original>L</original>
    <variation>M</variation>
    <location>
        <position position="384"/>
    </location>
</feature>
<feature type="mutagenesis site" description="Increased synthesis of 8-HPODE and 8-HODE." evidence="4">
    <original>L</original>
    <variation>V</variation>
    <location>
        <position position="384"/>
    </location>
</feature>
<feature type="mutagenesis site" description="Increased synthesis of 8-HODE, synthesis of 9-HPODE and 13-HPODE. Retains chirality in 10- and 8-HODE." evidence="4">
    <original>V</original>
    <variation>F</variation>
    <location>
        <position position="388"/>
    </location>
</feature>
<feature type="mutagenesis site" description="Increased synthesis of 8-HODE." evidence="4">
    <original>V</original>
    <variation>L</variation>
    <location>
        <position position="388"/>
    </location>
</feature>
<feature type="sequence conflict" description="In Ref. 3; ABV21633." evidence="7" ref="3">
    <original>PNKVSSVFFYWASLIIH</original>
    <variation>MILKTSTRSVKDFNAKT</variation>
    <location>
        <begin position="237"/>
        <end position="253"/>
    </location>
</feature>
<feature type="sequence conflict" description="In Ref. 3; ABV21633." evidence="7" ref="3">
    <original>FHNYAVEQL</original>
    <variation>SISNTN</variation>
    <location>
        <begin position="323"/>
        <end position="331"/>
    </location>
</feature>
<feature type="sequence conflict" description="In Ref. 3; ABV21633." evidence="7" ref="3">
    <original>L</original>
    <variation>LLTNDS</variation>
    <location>
        <position position="369"/>
    </location>
</feature>
<keyword id="KW-0106">Calcium</keyword>
<keyword id="KW-0223">Dioxygenase</keyword>
<keyword id="KW-0275">Fatty acid biosynthesis</keyword>
<keyword id="KW-0276">Fatty acid metabolism</keyword>
<keyword id="KW-0376">Hydrogen peroxide</keyword>
<keyword id="KW-0408">Iron</keyword>
<keyword id="KW-0444">Lipid biosynthesis</keyword>
<keyword id="KW-0443">Lipid metabolism</keyword>
<keyword id="KW-0479">Metal-binding</keyword>
<keyword id="KW-0560">Oxidoreductase</keyword>
<keyword id="KW-0575">Peroxidase</keyword>
<keyword id="KW-0643">Prostaglandin biosynthesis</keyword>
<keyword id="KW-0644">Prostaglandin metabolism</keyword>
<keyword id="KW-1185">Reference proteome</keyword>
<name>PPOC_ASPFU</name>
<gene>
    <name evidence="8" type="primary">ppoC</name>
    <name type="ORF">AFUA_3G12120</name>
</gene>
<proteinExistence type="evidence at protein level"/>
<comment type="function">
    <text evidence="3 4">Responsible for the synthesis of various fatty acid-derived oxylipins. Oxidizes linoleic acid primarily to 10R-hydroperoxy-8,12-octadecadienoic acid (10R-HPODE) and, to a lesser extent, 8R-hydroperoxylinoleic acid (8R-HPODE). Also synthesizes 10-hydroxy-octadeca-8,12-dienoic acid (10-HODE) from linoleic acid and primarily 8R-hydroxy-octadeca-9-monoenoic acid (8-HOME, also known as psiB beta) from oleic acid. 8-HOME forms part of psi factor, a mixture of oxylipins that regulates the balance between sexual and asexual spore production. Displays epoxyalcohol synthase activity. Plays a role in the synthesis of prostaglandins which may be required for pathogenicity.</text>
</comment>
<comment type="catalytic activity">
    <reaction evidence="4">
        <text>(9Z,12Z)-octadecadienoate + O2 = (8E,10R,12Z)-10-hydroperoxyoctadeca-8,12-dienoate</text>
        <dbReference type="Rhea" id="RHEA:31695"/>
        <dbReference type="ChEBI" id="CHEBI:15379"/>
        <dbReference type="ChEBI" id="CHEBI:30245"/>
        <dbReference type="ChEBI" id="CHEBI:63324"/>
        <dbReference type="EC" id="1.13.11.62"/>
    </reaction>
</comment>
<comment type="biophysicochemical properties">
    <kinetics>
        <KM evidence="4">0.05 mM for linoleic acid</KM>
    </kinetics>
</comment>
<comment type="disruption phenotype">
    <text evidence="3">Decreased prostaglandin (PG) production in triple ppoA/ppoB/ppoC mutants. The triple mutant is hypervirulent in the invasive pulmonary aspergillosis murine model system and shows increased tolerance to hydrogen peroxide stress.</text>
</comment>
<comment type="similarity">
    <text evidence="1">Belongs to the peroxidase family.</text>
</comment>
<organism>
    <name type="scientific">Aspergillus fumigatus (strain ATCC MYA-4609 / CBS 101355 / FGSC A1100 / Af293)</name>
    <name type="common">Neosartorya fumigata</name>
    <dbReference type="NCBI Taxonomy" id="330879"/>
    <lineage>
        <taxon>Eukaryota</taxon>
        <taxon>Fungi</taxon>
        <taxon>Dikarya</taxon>
        <taxon>Ascomycota</taxon>
        <taxon>Pezizomycotina</taxon>
        <taxon>Eurotiomycetes</taxon>
        <taxon>Eurotiomycetidae</taxon>
        <taxon>Eurotiales</taxon>
        <taxon>Aspergillaceae</taxon>
        <taxon>Aspergillus</taxon>
        <taxon>Aspergillus subgen. Fumigati</taxon>
    </lineage>
</organism>
<accession>Q4WY82</accession>
<accession>A7YMT7</accession>
<reference evidence="7 9" key="1">
    <citation type="journal article" date="2009" name="J. Biol. Chem.">
        <title>Leucine/valine residues direct oxygenation of linoleic acid by (10R)- and (8R)-dioxygenases: expression and site-directed mutagenesis of (10R)-dioxygenase with epoxyalcohol synthase activity.</title>
        <authorList>
            <person name="Garscha U."/>
            <person name="Oliw E.H."/>
        </authorList>
    </citation>
    <scope>NUCLEOTIDE SEQUENCE [MRNA]</scope>
    <scope>FUNCTION</scope>
    <scope>CATALYTIC ACTIVITY</scope>
    <scope>BIOPHYSICOCHEMICAL PROPERTIES</scope>
    <scope>MUTAGENESIS OF LEU-306; LEU-384 AND VAL-388</scope>
</reference>
<reference evidence="10" key="2">
    <citation type="journal article" date="2005" name="Nature">
        <title>Genomic sequence of the pathogenic and allergenic filamentous fungus Aspergillus fumigatus.</title>
        <authorList>
            <person name="Nierman W.C."/>
            <person name="Pain A."/>
            <person name="Anderson M.J."/>
            <person name="Wortman J.R."/>
            <person name="Kim H.S."/>
            <person name="Arroyo J."/>
            <person name="Berriman M."/>
            <person name="Abe K."/>
            <person name="Archer D.B."/>
            <person name="Bermejo C."/>
            <person name="Bennett J.W."/>
            <person name="Bowyer P."/>
            <person name="Chen D."/>
            <person name="Collins M."/>
            <person name="Coulsen R."/>
            <person name="Davies R."/>
            <person name="Dyer P.S."/>
            <person name="Farman M.L."/>
            <person name="Fedorova N."/>
            <person name="Fedorova N.D."/>
            <person name="Feldblyum T.V."/>
            <person name="Fischer R."/>
            <person name="Fosker N."/>
            <person name="Fraser A."/>
            <person name="Garcia J.L."/>
            <person name="Garcia M.J."/>
            <person name="Goble A."/>
            <person name="Goldman G.H."/>
            <person name="Gomi K."/>
            <person name="Griffith-Jones S."/>
            <person name="Gwilliam R."/>
            <person name="Haas B.J."/>
            <person name="Haas H."/>
            <person name="Harris D.E."/>
            <person name="Horiuchi H."/>
            <person name="Huang J."/>
            <person name="Humphray S."/>
            <person name="Jimenez J."/>
            <person name="Keller N."/>
            <person name="Khouri H."/>
            <person name="Kitamoto K."/>
            <person name="Kobayashi T."/>
            <person name="Konzack S."/>
            <person name="Kulkarni R."/>
            <person name="Kumagai T."/>
            <person name="Lafton A."/>
            <person name="Latge J.-P."/>
            <person name="Li W."/>
            <person name="Lord A."/>
            <person name="Lu C."/>
            <person name="Majoros W.H."/>
            <person name="May G.S."/>
            <person name="Miller B.L."/>
            <person name="Mohamoud Y."/>
            <person name="Molina M."/>
            <person name="Monod M."/>
            <person name="Mouyna I."/>
            <person name="Mulligan S."/>
            <person name="Murphy L.D."/>
            <person name="O'Neil S."/>
            <person name="Paulsen I."/>
            <person name="Penalva M.A."/>
            <person name="Pertea M."/>
            <person name="Price C."/>
            <person name="Pritchard B.L."/>
            <person name="Quail M.A."/>
            <person name="Rabbinowitsch E."/>
            <person name="Rawlins N."/>
            <person name="Rajandream M.A."/>
            <person name="Reichard U."/>
            <person name="Renauld H."/>
            <person name="Robson G.D."/>
            <person name="Rodriguez de Cordoba S."/>
            <person name="Rodriguez-Pena J.M."/>
            <person name="Ronning C.M."/>
            <person name="Rutter S."/>
            <person name="Salzberg S.L."/>
            <person name="Sanchez M."/>
            <person name="Sanchez-Ferrero J.C."/>
            <person name="Saunders D."/>
            <person name="Seeger K."/>
            <person name="Squares R."/>
            <person name="Squares S."/>
            <person name="Takeuchi M."/>
            <person name="Tekaia F."/>
            <person name="Turner G."/>
            <person name="Vazquez de Aldana C.R."/>
            <person name="Weidman J."/>
            <person name="White O."/>
            <person name="Woodward J.R."/>
            <person name="Yu J.-H."/>
            <person name="Fraser C.M."/>
            <person name="Galagan J.E."/>
            <person name="Asai K."/>
            <person name="Machida M."/>
            <person name="Hall N."/>
            <person name="Barrell B.G."/>
            <person name="Denning D.W."/>
        </authorList>
    </citation>
    <scope>NUCLEOTIDE SEQUENCE [LARGE SCALE GENOMIC DNA]</scope>
    <source>
        <strain>ATCC MYA-4609 / CBS 101355 / FGSC A1100 / Af293</strain>
    </source>
</reference>
<reference evidence="7 8" key="3">
    <citation type="journal article" date="2005" name="Infect. Immun.">
        <title>Aspergillus cyclooxygenase-like enzymes are associated with prostaglandin production and virulence.</title>
        <authorList>
            <person name="Tsitsigiannis D.I."/>
            <person name="Bok J.W."/>
            <person name="Andes D."/>
            <person name="Nielsen K.F."/>
            <person name="Frisvad J.C."/>
            <person name="Keller N.P."/>
        </authorList>
    </citation>
    <scope>NUCLEOTIDE SEQUENCE [MRNA] OF 237-1121</scope>
    <scope>FUNCTION</scope>
    <scope>DISRUPTION PHENOTYPE</scope>
    <source>
        <strain>ATCC MYA-4609 / CBS 101355 / FGSC A1100 / Af293</strain>
    </source>
</reference>
<protein>
    <recommendedName>
        <fullName>Linoleate 10R-lipoxygenase</fullName>
        <ecNumber>1.13.11.62</ecNumber>
    </recommendedName>
    <alternativeName>
        <fullName evidence="8">Cyclooxygenase-like fatty acid oxygenase</fullName>
    </alternativeName>
    <alternativeName>
        <fullName evidence="10">Fatty acid oxygenase ppoC</fullName>
    </alternativeName>
    <alternativeName>
        <fullName evidence="6 9">Linoleate 10R-dioxygenase</fullName>
        <shortName evidence="6">10R-DOX</shortName>
    </alternativeName>
    <alternativeName>
        <fullName evidence="5">Psi-producing oxygenase C</fullName>
        <shortName evidence="5">AfPpoC</shortName>
    </alternativeName>
</protein>
<sequence>MLRRFSSTFKKKGDRESKQNGTASSSSAAVANTNNNDNKRHSKISAARKSSSDDDRNEKKGNSVSPFEKYASVLHASRSPIPNQTGDGAYLEHEHTTSLLQDARHLGFKDFKTLKEVIESKLPGGQLIDDKTMLMERIIQLVSRLPHNSKHREELTNAFLTELWDSLPHPPLSYMGNDYAYRSADGSNNNPTLPRLGAANTLYARTIPPLIIQPGGLPDPGLVFDTLFARQTFKPHPNKVSSVFFYWASLIIHDIFQTDYKNPNMNKTSGYLDLSILYGDVQEEQNLIRTFKDGKLKPDSFSEPRLQAFPATCCVLMVMLNRFHNYAVEQLAAINENGRFTKPADNLSEEEAKKAWAKYDEDLFQTGRLITCGLYINITLYDYLRTIVNLNRTNSTWCLDPRAQMEGSHTAPSGLGNQCSVEFNLAYRWHSATSATDEKWTEDVYERLMGKPASEVSMTELLMGLGKYQAELPKDPSKRTFADLERQADGRFKDEDLVNLLVNAVEDVAGSFGARNVPKVLKNVEILGIIQSRKWNVGSLNEFRKFFGLKPYETFEEINSDPDVAESLRSLYDHPDFVELYPGIVAEEAKQPMVPGVGIAPTYTISRAVLSDAVALVRGDRFYTIDYNPRNLTNWGYSEVRYDLSINQGCIFYKLATRAFPNWFKPDSIYAHYPMTIPSENRKIMKDLGREIHYSWDRPQYTPPRVDLVSYSNAKLVAEQQNQFRAAWGDTVEFVFGKASKEFKLYQDSAFIQKHADVMSKLLNKEEWHRSVKEFYEDITAKLLEDKTRRFGGINQVDITNDVGNLTPVIFAANVFSLPLKSKENPRGIYTEHEMFKVLAALYNCLYFDIDKTKSYPLHHASQAVGEPLGKALEANVKALGGSSLLSGIFRSFRENKNALKEYGVHLTKQLLENGLGAHEIAWAQFLPTVIAMVPAQAQAFTQIVDFYLSKEGSKHLPAIQRLAKQDTKKSDEQLLHYCLEAVRLNDMSGLYRQSETTLAVTDEAVEVTIQPGDKVFVSFAKANRDASVFPDPAEVRLDRPMNSYINPTLGPHGFLSKETSHIALTAMLRAVGRLNNLRVAPGVQGQLKKIPQPGGYSAYLREDHGSYSIFPTTFRVQYDA</sequence>